<proteinExistence type="inferred from homology"/>
<comment type="function">
    <text evidence="1">Catalyzes the conversion of glucosamine-6-phosphate to glucosamine-1-phosphate.</text>
</comment>
<comment type="catalytic activity">
    <reaction evidence="1">
        <text>alpha-D-glucosamine 1-phosphate = D-glucosamine 6-phosphate</text>
        <dbReference type="Rhea" id="RHEA:23424"/>
        <dbReference type="ChEBI" id="CHEBI:58516"/>
        <dbReference type="ChEBI" id="CHEBI:58725"/>
        <dbReference type="EC" id="5.4.2.10"/>
    </reaction>
</comment>
<comment type="cofactor">
    <cofactor evidence="1">
        <name>Mg(2+)</name>
        <dbReference type="ChEBI" id="CHEBI:18420"/>
    </cofactor>
    <text evidence="1">Binds 1 Mg(2+) ion per subunit.</text>
</comment>
<comment type="PTM">
    <text evidence="1">Activated by phosphorylation.</text>
</comment>
<comment type="similarity">
    <text evidence="1">Belongs to the phosphohexose mutase family.</text>
</comment>
<dbReference type="EC" id="5.4.2.10" evidence="1"/>
<dbReference type="EMBL" id="AM295250">
    <property type="protein sequence ID" value="CAL28569.1"/>
    <property type="molecule type" value="Genomic_DNA"/>
</dbReference>
<dbReference type="RefSeq" id="WP_015900909.1">
    <property type="nucleotide sequence ID" value="NC_012121.1"/>
</dbReference>
<dbReference type="SMR" id="B9DM98"/>
<dbReference type="GeneID" id="93794114"/>
<dbReference type="KEGG" id="sca:SCA_1663"/>
<dbReference type="eggNOG" id="COG1109">
    <property type="taxonomic scope" value="Bacteria"/>
</dbReference>
<dbReference type="HOGENOM" id="CLU_016950_7_0_9"/>
<dbReference type="OrthoDB" id="9806956at2"/>
<dbReference type="BioCyc" id="SCAR396513:SCA_RS08435-MONOMER"/>
<dbReference type="Proteomes" id="UP000000444">
    <property type="component" value="Chromosome"/>
</dbReference>
<dbReference type="GO" id="GO:0005829">
    <property type="term" value="C:cytosol"/>
    <property type="evidence" value="ECO:0007669"/>
    <property type="project" value="TreeGrafter"/>
</dbReference>
<dbReference type="GO" id="GO:0000287">
    <property type="term" value="F:magnesium ion binding"/>
    <property type="evidence" value="ECO:0007669"/>
    <property type="project" value="UniProtKB-UniRule"/>
</dbReference>
<dbReference type="GO" id="GO:0008966">
    <property type="term" value="F:phosphoglucosamine mutase activity"/>
    <property type="evidence" value="ECO:0007669"/>
    <property type="project" value="UniProtKB-UniRule"/>
</dbReference>
<dbReference type="GO" id="GO:0004615">
    <property type="term" value="F:phosphomannomutase activity"/>
    <property type="evidence" value="ECO:0007669"/>
    <property type="project" value="TreeGrafter"/>
</dbReference>
<dbReference type="GO" id="GO:0005975">
    <property type="term" value="P:carbohydrate metabolic process"/>
    <property type="evidence" value="ECO:0007669"/>
    <property type="project" value="InterPro"/>
</dbReference>
<dbReference type="GO" id="GO:0009252">
    <property type="term" value="P:peptidoglycan biosynthetic process"/>
    <property type="evidence" value="ECO:0007669"/>
    <property type="project" value="TreeGrafter"/>
</dbReference>
<dbReference type="GO" id="GO:0006048">
    <property type="term" value="P:UDP-N-acetylglucosamine biosynthetic process"/>
    <property type="evidence" value="ECO:0007669"/>
    <property type="project" value="TreeGrafter"/>
</dbReference>
<dbReference type="CDD" id="cd05802">
    <property type="entry name" value="GlmM"/>
    <property type="match status" value="1"/>
</dbReference>
<dbReference type="FunFam" id="3.30.310.50:FF:000001">
    <property type="entry name" value="Phosphoglucosamine mutase"/>
    <property type="match status" value="1"/>
</dbReference>
<dbReference type="FunFam" id="3.40.120.10:FF:000001">
    <property type="entry name" value="Phosphoglucosamine mutase"/>
    <property type="match status" value="1"/>
</dbReference>
<dbReference type="FunFam" id="3.40.120.10:FF:000002">
    <property type="entry name" value="Phosphoglucosamine mutase"/>
    <property type="match status" value="1"/>
</dbReference>
<dbReference type="Gene3D" id="3.40.120.10">
    <property type="entry name" value="Alpha-D-Glucose-1,6-Bisphosphate, subunit A, domain 3"/>
    <property type="match status" value="3"/>
</dbReference>
<dbReference type="Gene3D" id="3.30.310.50">
    <property type="entry name" value="Alpha-D-phosphohexomutase, C-terminal domain"/>
    <property type="match status" value="1"/>
</dbReference>
<dbReference type="HAMAP" id="MF_01554_B">
    <property type="entry name" value="GlmM_B"/>
    <property type="match status" value="1"/>
</dbReference>
<dbReference type="InterPro" id="IPR005844">
    <property type="entry name" value="A-D-PHexomutase_a/b/a-I"/>
</dbReference>
<dbReference type="InterPro" id="IPR016055">
    <property type="entry name" value="A-D-PHexomutase_a/b/a-I/II/III"/>
</dbReference>
<dbReference type="InterPro" id="IPR005845">
    <property type="entry name" value="A-D-PHexomutase_a/b/a-II"/>
</dbReference>
<dbReference type="InterPro" id="IPR005846">
    <property type="entry name" value="A-D-PHexomutase_a/b/a-III"/>
</dbReference>
<dbReference type="InterPro" id="IPR005843">
    <property type="entry name" value="A-D-PHexomutase_C"/>
</dbReference>
<dbReference type="InterPro" id="IPR036900">
    <property type="entry name" value="A-D-PHexomutase_C_sf"/>
</dbReference>
<dbReference type="InterPro" id="IPR016066">
    <property type="entry name" value="A-D-PHexomutase_CS"/>
</dbReference>
<dbReference type="InterPro" id="IPR005841">
    <property type="entry name" value="Alpha-D-phosphohexomutase_SF"/>
</dbReference>
<dbReference type="InterPro" id="IPR006352">
    <property type="entry name" value="GlmM_bact"/>
</dbReference>
<dbReference type="InterPro" id="IPR050060">
    <property type="entry name" value="Phosphoglucosamine_mutase"/>
</dbReference>
<dbReference type="NCBIfam" id="TIGR01455">
    <property type="entry name" value="glmM"/>
    <property type="match status" value="1"/>
</dbReference>
<dbReference type="NCBIfam" id="NF008139">
    <property type="entry name" value="PRK10887.1"/>
    <property type="match status" value="1"/>
</dbReference>
<dbReference type="PANTHER" id="PTHR42946:SF1">
    <property type="entry name" value="PHOSPHOGLUCOMUTASE (ALPHA-D-GLUCOSE-1,6-BISPHOSPHATE-DEPENDENT)"/>
    <property type="match status" value="1"/>
</dbReference>
<dbReference type="PANTHER" id="PTHR42946">
    <property type="entry name" value="PHOSPHOHEXOSE MUTASE"/>
    <property type="match status" value="1"/>
</dbReference>
<dbReference type="Pfam" id="PF02878">
    <property type="entry name" value="PGM_PMM_I"/>
    <property type="match status" value="1"/>
</dbReference>
<dbReference type="Pfam" id="PF02879">
    <property type="entry name" value="PGM_PMM_II"/>
    <property type="match status" value="1"/>
</dbReference>
<dbReference type="Pfam" id="PF02880">
    <property type="entry name" value="PGM_PMM_III"/>
    <property type="match status" value="1"/>
</dbReference>
<dbReference type="Pfam" id="PF00408">
    <property type="entry name" value="PGM_PMM_IV"/>
    <property type="match status" value="1"/>
</dbReference>
<dbReference type="PRINTS" id="PR00509">
    <property type="entry name" value="PGMPMM"/>
</dbReference>
<dbReference type="SUPFAM" id="SSF55957">
    <property type="entry name" value="Phosphoglucomutase, C-terminal domain"/>
    <property type="match status" value="1"/>
</dbReference>
<dbReference type="SUPFAM" id="SSF53738">
    <property type="entry name" value="Phosphoglucomutase, first 3 domains"/>
    <property type="match status" value="3"/>
</dbReference>
<dbReference type="PROSITE" id="PS00710">
    <property type="entry name" value="PGM_PMM"/>
    <property type="match status" value="1"/>
</dbReference>
<gene>
    <name evidence="1" type="primary">glmM</name>
    <name type="ordered locus">Sca_1663</name>
</gene>
<accession>B9DM98</accession>
<reference key="1">
    <citation type="journal article" date="2009" name="Appl. Environ. Microbiol.">
        <title>Genome analysis of the meat starter culture bacterium Staphylococcus carnosus TM300.</title>
        <authorList>
            <person name="Rosenstein R."/>
            <person name="Nerz C."/>
            <person name="Biswas L."/>
            <person name="Resch A."/>
            <person name="Raddatz G."/>
            <person name="Schuster S.C."/>
            <person name="Goetz F."/>
        </authorList>
    </citation>
    <scope>NUCLEOTIDE SEQUENCE [LARGE SCALE GENOMIC DNA]</scope>
    <source>
        <strain>TM300</strain>
    </source>
</reference>
<name>GLMM_STACT</name>
<sequence length="451" mass="48793">MGKYFGTDGVRGVANKELTPELAFKLGRYGGYVLAHNEDKKHPQVLVGRDTRVSGEMLESALIAGLISIGAEVMRLGVISTPGVAYLTKEMDAELGVMISASHNPVADNGIKFFGSDGFKLSDDQENEIEALLDEENPDLPRPVGNEIVHYSDYFEGAQKYLSYIKSTIDVNLDGLKIALDGANGSTSQLAPFLFGDLEADTEVIGCSPDGYNINEGVGSTHPEALAKTVVETESDFGLAFDGDGDRLIAVDEKGNIVDGDQIMFIIGQEMAKNQELNDNMIVSTVMSNLGFYKALEAEGIKSNKTKVGDRYVVEEMRKGNYNLGGEQSGHIVLMDYNTTGDGLLTGVQLAAVVKLTGKSLSELAEQMKKYPQSLINVRVTDKHGVTDNEDVKAEMDRVEADMNGEGRILVRPSGTEPLVRVMVEAATDEKAQSYAQQIADVVEEKMGLDN</sequence>
<evidence type="ECO:0000255" key="1">
    <source>
        <dbReference type="HAMAP-Rule" id="MF_01554"/>
    </source>
</evidence>
<feature type="chain" id="PRO_1000185382" description="Phosphoglucosamine mutase">
    <location>
        <begin position="1"/>
        <end position="451"/>
    </location>
</feature>
<feature type="active site" description="Phosphoserine intermediate" evidence="1">
    <location>
        <position position="102"/>
    </location>
</feature>
<feature type="binding site" description="via phosphate group" evidence="1">
    <location>
        <position position="102"/>
    </location>
    <ligand>
        <name>Mg(2+)</name>
        <dbReference type="ChEBI" id="CHEBI:18420"/>
    </ligand>
</feature>
<feature type="binding site" evidence="1">
    <location>
        <position position="242"/>
    </location>
    <ligand>
        <name>Mg(2+)</name>
        <dbReference type="ChEBI" id="CHEBI:18420"/>
    </ligand>
</feature>
<feature type="binding site" evidence="1">
    <location>
        <position position="244"/>
    </location>
    <ligand>
        <name>Mg(2+)</name>
        <dbReference type="ChEBI" id="CHEBI:18420"/>
    </ligand>
</feature>
<feature type="binding site" evidence="1">
    <location>
        <position position="246"/>
    </location>
    <ligand>
        <name>Mg(2+)</name>
        <dbReference type="ChEBI" id="CHEBI:18420"/>
    </ligand>
</feature>
<feature type="modified residue" description="Phosphoserine" evidence="1">
    <location>
        <position position="102"/>
    </location>
</feature>
<organism>
    <name type="scientific">Staphylococcus carnosus (strain TM300)</name>
    <dbReference type="NCBI Taxonomy" id="396513"/>
    <lineage>
        <taxon>Bacteria</taxon>
        <taxon>Bacillati</taxon>
        <taxon>Bacillota</taxon>
        <taxon>Bacilli</taxon>
        <taxon>Bacillales</taxon>
        <taxon>Staphylococcaceae</taxon>
        <taxon>Staphylococcus</taxon>
    </lineage>
</organism>
<keyword id="KW-0413">Isomerase</keyword>
<keyword id="KW-0460">Magnesium</keyword>
<keyword id="KW-0479">Metal-binding</keyword>
<keyword id="KW-0597">Phosphoprotein</keyword>
<keyword id="KW-1185">Reference proteome</keyword>
<protein>
    <recommendedName>
        <fullName evidence="1">Phosphoglucosamine mutase</fullName>
        <ecNumber evidence="1">5.4.2.10</ecNumber>
    </recommendedName>
</protein>